<protein>
    <recommendedName>
        <fullName>Pyruvate dehydrogenase E1 component subunit alpha</fullName>
        <ecNumber>1.2.4.1</ecNumber>
    </recommendedName>
</protein>
<feature type="chain" id="PRO_0000162207" description="Pyruvate dehydrogenase E1 component subunit alpha">
    <location>
        <begin position="1"/>
        <end position="370"/>
    </location>
</feature>
<gene>
    <name type="primary">pdhA</name>
    <name type="ordered locus">SA0943.1</name>
</gene>
<organism>
    <name type="scientific">Staphylococcus aureus (strain N315)</name>
    <dbReference type="NCBI Taxonomy" id="158879"/>
    <lineage>
        <taxon>Bacteria</taxon>
        <taxon>Bacillati</taxon>
        <taxon>Bacillota</taxon>
        <taxon>Bacilli</taxon>
        <taxon>Bacillales</taxon>
        <taxon>Staphylococcaceae</taxon>
        <taxon>Staphylococcus</taxon>
    </lineage>
</organism>
<keyword id="KW-0560">Oxidoreductase</keyword>
<keyword id="KW-0670">Pyruvate</keyword>
<keyword id="KW-0786">Thiamine pyrophosphate</keyword>
<comment type="function">
    <text evidence="1">The pyruvate dehydrogenase complex catalyzes the overall conversion of pyruvate to acetyl-CoA and CO(2). It contains multiple copies of three enzymatic components: pyruvate dehydrogenase (E1), dihydrolipoamide acetyltransferase (E2) and lipoamide dehydrogenase (E3) (By similarity).</text>
</comment>
<comment type="catalytic activity">
    <reaction>
        <text>N(6)-[(R)-lipoyl]-L-lysyl-[protein] + pyruvate + H(+) = N(6)-[(R)-S(8)-acetyldihydrolipoyl]-L-lysyl-[protein] + CO2</text>
        <dbReference type="Rhea" id="RHEA:19189"/>
        <dbReference type="Rhea" id="RHEA-COMP:10474"/>
        <dbReference type="Rhea" id="RHEA-COMP:10478"/>
        <dbReference type="ChEBI" id="CHEBI:15361"/>
        <dbReference type="ChEBI" id="CHEBI:15378"/>
        <dbReference type="ChEBI" id="CHEBI:16526"/>
        <dbReference type="ChEBI" id="CHEBI:83099"/>
        <dbReference type="ChEBI" id="CHEBI:83111"/>
        <dbReference type="EC" id="1.2.4.1"/>
    </reaction>
</comment>
<comment type="cofactor">
    <cofactor evidence="1">
        <name>thiamine diphosphate</name>
        <dbReference type="ChEBI" id="CHEBI:58937"/>
    </cofactor>
</comment>
<comment type="subunit">
    <text>Heterodimer of an alpha and a beta chain.</text>
</comment>
<evidence type="ECO:0000250" key="1"/>
<sequence length="370" mass="41383">MAPKLQAQFDAVKVLNDTQSKFEMVQILDENGNVVNEDLVPDLTDEQLVELMERMVWTRILDQRSISLNRQGRLGFYAPTAGQEASQLASQYALEKEDYILPGYRDVPQIIWHGLPLTEAFLFSRGHFKGNQFPEGVNALSPQIIIGAQYIQAAGVAFALKKRGKNAVAITYTGDGGSSQGDFYEGINFAAAYKAPAIFVIQNNNYAISTPRSKQTAAETLAQKAIAVGIPGIQVDGMDALAVYQATKEARDRAVAGEGPTLIETMTYRYGPHTMAGDDPTRYRTSDEDAEWEKKDPLVRFRKFLENKGLWNEDKENEVIERAKADIKAAIKEADNTEKQTVTSLMEIMYEDMPQNLAEQYEIYKEKESK</sequence>
<proteinExistence type="evidence at protein level"/>
<accession>Q820A6</accession>
<name>ODPA_STAAN</name>
<dbReference type="EC" id="1.2.4.1"/>
<dbReference type="EMBL" id="BA000018">
    <property type="protein sequence ID" value="BAC55165.1"/>
    <property type="molecule type" value="Genomic_DNA"/>
</dbReference>
<dbReference type="RefSeq" id="WP_000035320.1">
    <property type="nucleotide sequence ID" value="NC_002745.2"/>
</dbReference>
<dbReference type="SMR" id="Q820A6"/>
<dbReference type="EnsemblBacteria" id="BAC55165">
    <property type="protein sequence ID" value="BAC55165"/>
    <property type="gene ID" value="BAC55165"/>
</dbReference>
<dbReference type="KEGG" id="sau:SA0943-1"/>
<dbReference type="HOGENOM" id="CLU_029393_1_0_9"/>
<dbReference type="GO" id="GO:0004739">
    <property type="term" value="F:pyruvate dehydrogenase (acetyl-transferring) activity"/>
    <property type="evidence" value="ECO:0007669"/>
    <property type="project" value="UniProtKB-EC"/>
</dbReference>
<dbReference type="GO" id="GO:0009083">
    <property type="term" value="P:branched-chain amino acid catabolic process"/>
    <property type="evidence" value="ECO:0007669"/>
    <property type="project" value="TreeGrafter"/>
</dbReference>
<dbReference type="CDD" id="cd02000">
    <property type="entry name" value="TPP_E1_PDC_ADC_BCADC"/>
    <property type="match status" value="1"/>
</dbReference>
<dbReference type="FunFam" id="3.40.50.970:FF:000023">
    <property type="entry name" value="Pyruvate dehydrogenase E1 component subunit alpha"/>
    <property type="match status" value="1"/>
</dbReference>
<dbReference type="Gene3D" id="3.40.50.970">
    <property type="match status" value="1"/>
</dbReference>
<dbReference type="InterPro" id="IPR050771">
    <property type="entry name" value="Alpha-ketoacid_DH_E1_comp"/>
</dbReference>
<dbReference type="InterPro" id="IPR001017">
    <property type="entry name" value="DH_E1"/>
</dbReference>
<dbReference type="InterPro" id="IPR017596">
    <property type="entry name" value="PdhA/BkdA"/>
</dbReference>
<dbReference type="InterPro" id="IPR029061">
    <property type="entry name" value="THDP-binding"/>
</dbReference>
<dbReference type="NCBIfam" id="TIGR03181">
    <property type="entry name" value="PDH_E1_alph_x"/>
    <property type="match status" value="1"/>
</dbReference>
<dbReference type="PANTHER" id="PTHR43380">
    <property type="entry name" value="2-OXOISOVALERATE DEHYDROGENASE SUBUNIT ALPHA, MITOCHONDRIAL"/>
    <property type="match status" value="1"/>
</dbReference>
<dbReference type="PANTHER" id="PTHR43380:SF1">
    <property type="entry name" value="2-OXOISOVALERATE DEHYDROGENASE SUBUNIT ALPHA, MITOCHONDRIAL"/>
    <property type="match status" value="1"/>
</dbReference>
<dbReference type="Pfam" id="PF00676">
    <property type="entry name" value="E1_dh"/>
    <property type="match status" value="1"/>
</dbReference>
<dbReference type="SUPFAM" id="SSF52518">
    <property type="entry name" value="Thiamin diphosphate-binding fold (THDP-binding)"/>
    <property type="match status" value="1"/>
</dbReference>
<reference key="1">
    <citation type="journal article" date="2001" name="Lancet">
        <title>Whole genome sequencing of meticillin-resistant Staphylococcus aureus.</title>
        <authorList>
            <person name="Kuroda M."/>
            <person name="Ohta T."/>
            <person name="Uchiyama I."/>
            <person name="Baba T."/>
            <person name="Yuzawa H."/>
            <person name="Kobayashi I."/>
            <person name="Cui L."/>
            <person name="Oguchi A."/>
            <person name="Aoki K."/>
            <person name="Nagai Y."/>
            <person name="Lian J.-Q."/>
            <person name="Ito T."/>
            <person name="Kanamori M."/>
            <person name="Matsumaru H."/>
            <person name="Maruyama A."/>
            <person name="Murakami H."/>
            <person name="Hosoyama A."/>
            <person name="Mizutani-Ui Y."/>
            <person name="Takahashi N.K."/>
            <person name="Sawano T."/>
            <person name="Inoue R."/>
            <person name="Kaito C."/>
            <person name="Sekimizu K."/>
            <person name="Hirakawa H."/>
            <person name="Kuhara S."/>
            <person name="Goto S."/>
            <person name="Yabuzaki J."/>
            <person name="Kanehisa M."/>
            <person name="Yamashita A."/>
            <person name="Oshima K."/>
            <person name="Furuya K."/>
            <person name="Yoshino C."/>
            <person name="Shiba T."/>
            <person name="Hattori M."/>
            <person name="Ogasawara N."/>
            <person name="Hayashi H."/>
            <person name="Hiramatsu K."/>
        </authorList>
    </citation>
    <scope>NUCLEOTIDE SEQUENCE [LARGE SCALE GENOMIC DNA]</scope>
    <source>
        <strain>N315</strain>
    </source>
</reference>
<reference key="2">
    <citation type="journal article" date="2005" name="J. Microbiol. Methods">
        <title>Correlation of proteomic and transcriptomic profiles of Staphylococcus aureus during the post-exponential phase of growth.</title>
        <authorList>
            <person name="Scherl A."/>
            <person name="Francois P."/>
            <person name="Bento M."/>
            <person name="Deshusses J.M."/>
            <person name="Charbonnier Y."/>
            <person name="Converset V."/>
            <person name="Huyghe A."/>
            <person name="Walter N."/>
            <person name="Hoogland C."/>
            <person name="Appel R.D."/>
            <person name="Sanchez J.-C."/>
            <person name="Zimmermann-Ivol C.G."/>
            <person name="Corthals G.L."/>
            <person name="Hochstrasser D.F."/>
            <person name="Schrenzel J."/>
        </authorList>
    </citation>
    <scope>IDENTIFICATION BY MASS SPECTROMETRY</scope>
    <source>
        <strain>N315</strain>
    </source>
</reference>
<reference key="3">
    <citation type="submission" date="2007-10" db="UniProtKB">
        <title>Shotgun proteomic analysis of total and membrane protein extracts of S. aureus strain N315.</title>
        <authorList>
            <person name="Vaezzadeh A.R."/>
            <person name="Deshusses J."/>
            <person name="Lescuyer P."/>
            <person name="Hochstrasser D.F."/>
        </authorList>
    </citation>
    <scope>IDENTIFICATION BY MASS SPECTROMETRY [LARGE SCALE ANALYSIS]</scope>
    <source>
        <strain>N315</strain>
    </source>
</reference>